<name>CCA_PSEA6</name>
<reference key="1">
    <citation type="submission" date="2006-06" db="EMBL/GenBank/DDBJ databases">
        <title>Complete sequence of Pseudoalteromonas atlantica T6c.</title>
        <authorList>
            <consortium name="US DOE Joint Genome Institute"/>
            <person name="Copeland A."/>
            <person name="Lucas S."/>
            <person name="Lapidus A."/>
            <person name="Barry K."/>
            <person name="Detter J.C."/>
            <person name="Glavina del Rio T."/>
            <person name="Hammon N."/>
            <person name="Israni S."/>
            <person name="Dalin E."/>
            <person name="Tice H."/>
            <person name="Pitluck S."/>
            <person name="Saunders E."/>
            <person name="Brettin T."/>
            <person name="Bruce D."/>
            <person name="Han C."/>
            <person name="Tapia R."/>
            <person name="Gilna P."/>
            <person name="Schmutz J."/>
            <person name="Larimer F."/>
            <person name="Land M."/>
            <person name="Hauser L."/>
            <person name="Kyrpides N."/>
            <person name="Kim E."/>
            <person name="Karls A.C."/>
            <person name="Bartlett D."/>
            <person name="Higgins B.P."/>
            <person name="Richardson P."/>
        </authorList>
    </citation>
    <scope>NUCLEOTIDE SEQUENCE [LARGE SCALE GENOMIC DNA]</scope>
    <source>
        <strain>T6c / ATCC BAA-1087</strain>
    </source>
</reference>
<keyword id="KW-0067">ATP-binding</keyword>
<keyword id="KW-0378">Hydrolase</keyword>
<keyword id="KW-0460">Magnesium</keyword>
<keyword id="KW-0479">Metal-binding</keyword>
<keyword id="KW-0511">Multifunctional enzyme</keyword>
<keyword id="KW-0533">Nickel</keyword>
<keyword id="KW-0547">Nucleotide-binding</keyword>
<keyword id="KW-0548">Nucleotidyltransferase</keyword>
<keyword id="KW-0692">RNA repair</keyword>
<keyword id="KW-0694">RNA-binding</keyword>
<keyword id="KW-0808">Transferase</keyword>
<keyword id="KW-0819">tRNA processing</keyword>
<protein>
    <recommendedName>
        <fullName evidence="1">Multifunctional CCA protein</fullName>
    </recommendedName>
    <domain>
        <recommendedName>
            <fullName evidence="1">CCA-adding enzyme</fullName>
            <ecNumber evidence="1">2.7.7.72</ecNumber>
        </recommendedName>
        <alternativeName>
            <fullName evidence="1">CCA tRNA nucleotidyltransferase</fullName>
        </alternativeName>
        <alternativeName>
            <fullName evidence="1">tRNA CCA-pyrophosphorylase</fullName>
        </alternativeName>
        <alternativeName>
            <fullName evidence="1">tRNA adenylyl-/cytidylyl-transferase</fullName>
        </alternativeName>
        <alternativeName>
            <fullName evidence="1">tRNA nucleotidyltransferase</fullName>
        </alternativeName>
        <alternativeName>
            <fullName evidence="1">tRNA-NT</fullName>
        </alternativeName>
    </domain>
    <domain>
        <recommendedName>
            <fullName evidence="1">2'-nucleotidase</fullName>
            <ecNumber evidence="1">3.1.3.-</ecNumber>
        </recommendedName>
    </domain>
    <domain>
        <recommendedName>
            <fullName evidence="1">2',3'-cyclic phosphodiesterase</fullName>
            <ecNumber evidence="1">3.1.4.-</ecNumber>
        </recommendedName>
    </domain>
    <domain>
        <recommendedName>
            <fullName evidence="1">Phosphatase</fullName>
            <ecNumber evidence="1">3.1.3.-</ecNumber>
        </recommendedName>
    </domain>
</protein>
<sequence length="405" mass="45920">MQVYLVGGAVRDKLLERPVKDKDWVVVGASEADMLAKGFQQVGKDFPVFLHPKTQQEYALARTERKIGQGYAGFECDTSTNVTLEQDLLRRDLTVNAMAMDDNGNIIDPFNGQKDLRNRVLRHVSDAFEEDPLRVLRVARFAARYASYGFSIADETKTLMANITQSGELSHLSAERVWVETAKSLLEDTPQIYFETLRECGALKVWFAELDCLWGIPNPAKWHPEIDTGIHSMMVLEQSVRVSHKLSVRFAALVHDLGKGLTPPEEWPSHRGHEKRGLVPINTLCERLKVPNDCRDLALLMSEFHSHVHHAFKLKAATINDFLDKCDVWRKPERFADLLLACTADAKGRTGFEERPYPNADYIWQAYLLAKEVNVQEIVQAGYKGAEIKQQLRQKRIHAIATNVA</sequence>
<gene>
    <name evidence="1" type="primary">cca</name>
    <name type="ordered locus">Patl_3282</name>
</gene>
<organism>
    <name type="scientific">Pseudoalteromonas atlantica (strain T6c / ATCC BAA-1087)</name>
    <dbReference type="NCBI Taxonomy" id="3042615"/>
    <lineage>
        <taxon>Bacteria</taxon>
        <taxon>Pseudomonadati</taxon>
        <taxon>Pseudomonadota</taxon>
        <taxon>Gammaproteobacteria</taxon>
        <taxon>Alteromonadales</taxon>
        <taxon>Alteromonadaceae</taxon>
        <taxon>Paraglaciecola</taxon>
    </lineage>
</organism>
<evidence type="ECO:0000255" key="1">
    <source>
        <dbReference type="HAMAP-Rule" id="MF_01261"/>
    </source>
</evidence>
<comment type="function">
    <text evidence="1">Catalyzes the addition and repair of the essential 3'-terminal CCA sequence in tRNAs without using a nucleic acid template. Adds these three nucleotides in the order of C, C, and A to the tRNA nucleotide-73, using CTP and ATP as substrates and producing inorganic pyrophosphate. tRNA 3'-terminal CCA addition is required both for tRNA processing and repair. Also involved in tRNA surveillance by mediating tandem CCA addition to generate a CCACCA at the 3' terminus of unstable tRNAs. While stable tRNAs receive only 3'-terminal CCA, unstable tRNAs are marked with CCACCA and rapidly degraded.</text>
</comment>
<comment type="catalytic activity">
    <reaction evidence="1">
        <text>a tRNA precursor + 2 CTP + ATP = a tRNA with a 3' CCA end + 3 diphosphate</text>
        <dbReference type="Rhea" id="RHEA:14433"/>
        <dbReference type="Rhea" id="RHEA-COMP:10465"/>
        <dbReference type="Rhea" id="RHEA-COMP:10468"/>
        <dbReference type="ChEBI" id="CHEBI:30616"/>
        <dbReference type="ChEBI" id="CHEBI:33019"/>
        <dbReference type="ChEBI" id="CHEBI:37563"/>
        <dbReference type="ChEBI" id="CHEBI:74896"/>
        <dbReference type="ChEBI" id="CHEBI:83071"/>
        <dbReference type="EC" id="2.7.7.72"/>
    </reaction>
</comment>
<comment type="catalytic activity">
    <reaction evidence="1">
        <text>a tRNA with a 3' CCA end + 2 CTP + ATP = a tRNA with a 3' CCACCA end + 3 diphosphate</text>
        <dbReference type="Rhea" id="RHEA:76235"/>
        <dbReference type="Rhea" id="RHEA-COMP:10468"/>
        <dbReference type="Rhea" id="RHEA-COMP:18655"/>
        <dbReference type="ChEBI" id="CHEBI:30616"/>
        <dbReference type="ChEBI" id="CHEBI:33019"/>
        <dbReference type="ChEBI" id="CHEBI:37563"/>
        <dbReference type="ChEBI" id="CHEBI:83071"/>
        <dbReference type="ChEBI" id="CHEBI:195187"/>
    </reaction>
    <physiologicalReaction direction="left-to-right" evidence="1">
        <dbReference type="Rhea" id="RHEA:76236"/>
    </physiologicalReaction>
</comment>
<comment type="cofactor">
    <cofactor evidence="1">
        <name>Mg(2+)</name>
        <dbReference type="ChEBI" id="CHEBI:18420"/>
    </cofactor>
    <text evidence="1">Magnesium is required for nucleotidyltransferase activity.</text>
</comment>
<comment type="cofactor">
    <cofactor evidence="1">
        <name>Ni(2+)</name>
        <dbReference type="ChEBI" id="CHEBI:49786"/>
    </cofactor>
    <text evidence="1">Nickel for phosphatase activity.</text>
</comment>
<comment type="subunit">
    <text evidence="1">Monomer. Can also form homodimers and oligomers.</text>
</comment>
<comment type="domain">
    <text evidence="1">Comprises two domains: an N-terminal domain containing the nucleotidyltransferase activity and a C-terminal HD domain associated with both phosphodiesterase and phosphatase activities.</text>
</comment>
<comment type="miscellaneous">
    <text evidence="1">A single active site specifically recognizes both ATP and CTP and is responsible for their addition.</text>
</comment>
<comment type="similarity">
    <text evidence="1">Belongs to the tRNA nucleotidyltransferase/poly(A) polymerase family. Bacterial CCA-adding enzyme type 1 subfamily.</text>
</comment>
<feature type="chain" id="PRO_1000054280" description="Multifunctional CCA protein">
    <location>
        <begin position="1"/>
        <end position="405"/>
    </location>
</feature>
<feature type="domain" description="HD" evidence="1">
    <location>
        <begin position="228"/>
        <end position="329"/>
    </location>
</feature>
<feature type="binding site" evidence="1">
    <location>
        <position position="8"/>
    </location>
    <ligand>
        <name>ATP</name>
        <dbReference type="ChEBI" id="CHEBI:30616"/>
    </ligand>
</feature>
<feature type="binding site" evidence="1">
    <location>
        <position position="8"/>
    </location>
    <ligand>
        <name>CTP</name>
        <dbReference type="ChEBI" id="CHEBI:37563"/>
    </ligand>
</feature>
<feature type="binding site" evidence="1">
    <location>
        <position position="11"/>
    </location>
    <ligand>
        <name>ATP</name>
        <dbReference type="ChEBI" id="CHEBI:30616"/>
    </ligand>
</feature>
<feature type="binding site" evidence="1">
    <location>
        <position position="11"/>
    </location>
    <ligand>
        <name>CTP</name>
        <dbReference type="ChEBI" id="CHEBI:37563"/>
    </ligand>
</feature>
<feature type="binding site" evidence="1">
    <location>
        <position position="21"/>
    </location>
    <ligand>
        <name>Mg(2+)</name>
        <dbReference type="ChEBI" id="CHEBI:18420"/>
    </ligand>
</feature>
<feature type="binding site" evidence="1">
    <location>
        <position position="23"/>
    </location>
    <ligand>
        <name>Mg(2+)</name>
        <dbReference type="ChEBI" id="CHEBI:18420"/>
    </ligand>
</feature>
<feature type="binding site" evidence="1">
    <location>
        <position position="91"/>
    </location>
    <ligand>
        <name>ATP</name>
        <dbReference type="ChEBI" id="CHEBI:30616"/>
    </ligand>
</feature>
<feature type="binding site" evidence="1">
    <location>
        <position position="91"/>
    </location>
    <ligand>
        <name>CTP</name>
        <dbReference type="ChEBI" id="CHEBI:37563"/>
    </ligand>
</feature>
<feature type="binding site" evidence="1">
    <location>
        <position position="137"/>
    </location>
    <ligand>
        <name>ATP</name>
        <dbReference type="ChEBI" id="CHEBI:30616"/>
    </ligand>
</feature>
<feature type="binding site" evidence="1">
    <location>
        <position position="137"/>
    </location>
    <ligand>
        <name>CTP</name>
        <dbReference type="ChEBI" id="CHEBI:37563"/>
    </ligand>
</feature>
<feature type="binding site" evidence="1">
    <location>
        <position position="140"/>
    </location>
    <ligand>
        <name>ATP</name>
        <dbReference type="ChEBI" id="CHEBI:30616"/>
    </ligand>
</feature>
<feature type="binding site" evidence="1">
    <location>
        <position position="140"/>
    </location>
    <ligand>
        <name>CTP</name>
        <dbReference type="ChEBI" id="CHEBI:37563"/>
    </ligand>
</feature>
<accession>Q15QQ0</accession>
<proteinExistence type="inferred from homology"/>
<dbReference type="EC" id="2.7.7.72" evidence="1"/>
<dbReference type="EC" id="3.1.3.-" evidence="1"/>
<dbReference type="EC" id="3.1.4.-" evidence="1"/>
<dbReference type="EMBL" id="CP000388">
    <property type="protein sequence ID" value="ABG41788.1"/>
    <property type="molecule type" value="Genomic_DNA"/>
</dbReference>
<dbReference type="RefSeq" id="WP_011576018.1">
    <property type="nucleotide sequence ID" value="NC_008228.1"/>
</dbReference>
<dbReference type="SMR" id="Q15QQ0"/>
<dbReference type="STRING" id="342610.Patl_3282"/>
<dbReference type="KEGG" id="pat:Patl_3282"/>
<dbReference type="eggNOG" id="COG0617">
    <property type="taxonomic scope" value="Bacteria"/>
</dbReference>
<dbReference type="HOGENOM" id="CLU_015961_1_1_6"/>
<dbReference type="OrthoDB" id="9805698at2"/>
<dbReference type="Proteomes" id="UP000001981">
    <property type="component" value="Chromosome"/>
</dbReference>
<dbReference type="GO" id="GO:0005524">
    <property type="term" value="F:ATP binding"/>
    <property type="evidence" value="ECO:0007669"/>
    <property type="project" value="UniProtKB-UniRule"/>
</dbReference>
<dbReference type="GO" id="GO:0004810">
    <property type="term" value="F:CCA tRNA nucleotidyltransferase activity"/>
    <property type="evidence" value="ECO:0007669"/>
    <property type="project" value="UniProtKB-UniRule"/>
</dbReference>
<dbReference type="GO" id="GO:0004112">
    <property type="term" value="F:cyclic-nucleotide phosphodiesterase activity"/>
    <property type="evidence" value="ECO:0007669"/>
    <property type="project" value="UniProtKB-UniRule"/>
</dbReference>
<dbReference type="GO" id="GO:0000287">
    <property type="term" value="F:magnesium ion binding"/>
    <property type="evidence" value="ECO:0007669"/>
    <property type="project" value="UniProtKB-UniRule"/>
</dbReference>
<dbReference type="GO" id="GO:0016791">
    <property type="term" value="F:phosphatase activity"/>
    <property type="evidence" value="ECO:0007669"/>
    <property type="project" value="UniProtKB-UniRule"/>
</dbReference>
<dbReference type="GO" id="GO:0000049">
    <property type="term" value="F:tRNA binding"/>
    <property type="evidence" value="ECO:0007669"/>
    <property type="project" value="UniProtKB-UniRule"/>
</dbReference>
<dbReference type="GO" id="GO:0042245">
    <property type="term" value="P:RNA repair"/>
    <property type="evidence" value="ECO:0007669"/>
    <property type="project" value="UniProtKB-KW"/>
</dbReference>
<dbReference type="GO" id="GO:0001680">
    <property type="term" value="P:tRNA 3'-terminal CCA addition"/>
    <property type="evidence" value="ECO:0007669"/>
    <property type="project" value="UniProtKB-UniRule"/>
</dbReference>
<dbReference type="CDD" id="cd00077">
    <property type="entry name" value="HDc"/>
    <property type="match status" value="1"/>
</dbReference>
<dbReference type="CDD" id="cd05398">
    <property type="entry name" value="NT_ClassII-CCAase"/>
    <property type="match status" value="1"/>
</dbReference>
<dbReference type="Gene3D" id="3.30.460.10">
    <property type="entry name" value="Beta Polymerase, domain 2"/>
    <property type="match status" value="1"/>
</dbReference>
<dbReference type="Gene3D" id="1.10.3090.10">
    <property type="entry name" value="cca-adding enzyme, domain 2"/>
    <property type="match status" value="1"/>
</dbReference>
<dbReference type="HAMAP" id="MF_01261">
    <property type="entry name" value="CCA_bact_type1"/>
    <property type="match status" value="1"/>
</dbReference>
<dbReference type="HAMAP" id="MF_01262">
    <property type="entry name" value="CCA_bact_type2"/>
    <property type="match status" value="1"/>
</dbReference>
<dbReference type="InterPro" id="IPR012006">
    <property type="entry name" value="CCA_bact"/>
</dbReference>
<dbReference type="InterPro" id="IPR003607">
    <property type="entry name" value="HD/PDEase_dom"/>
</dbReference>
<dbReference type="InterPro" id="IPR006674">
    <property type="entry name" value="HD_domain"/>
</dbReference>
<dbReference type="InterPro" id="IPR043519">
    <property type="entry name" value="NT_sf"/>
</dbReference>
<dbReference type="InterPro" id="IPR002646">
    <property type="entry name" value="PolA_pol_head_dom"/>
</dbReference>
<dbReference type="InterPro" id="IPR032828">
    <property type="entry name" value="PolyA_RNA-bd"/>
</dbReference>
<dbReference type="InterPro" id="IPR050124">
    <property type="entry name" value="tRNA_CCA-adding_enzyme"/>
</dbReference>
<dbReference type="NCBIfam" id="NF008137">
    <property type="entry name" value="PRK10885.1"/>
    <property type="match status" value="1"/>
</dbReference>
<dbReference type="PANTHER" id="PTHR47545">
    <property type="entry name" value="MULTIFUNCTIONAL CCA PROTEIN"/>
    <property type="match status" value="1"/>
</dbReference>
<dbReference type="PANTHER" id="PTHR47545:SF1">
    <property type="entry name" value="MULTIFUNCTIONAL CCA PROTEIN"/>
    <property type="match status" value="1"/>
</dbReference>
<dbReference type="Pfam" id="PF01966">
    <property type="entry name" value="HD"/>
    <property type="match status" value="1"/>
</dbReference>
<dbReference type="Pfam" id="PF01743">
    <property type="entry name" value="PolyA_pol"/>
    <property type="match status" value="1"/>
</dbReference>
<dbReference type="Pfam" id="PF12627">
    <property type="entry name" value="PolyA_pol_RNAbd"/>
    <property type="match status" value="1"/>
</dbReference>
<dbReference type="PIRSF" id="PIRSF000813">
    <property type="entry name" value="CCA_bact"/>
    <property type="match status" value="1"/>
</dbReference>
<dbReference type="SUPFAM" id="SSF81301">
    <property type="entry name" value="Nucleotidyltransferase"/>
    <property type="match status" value="1"/>
</dbReference>
<dbReference type="SUPFAM" id="SSF81891">
    <property type="entry name" value="Poly A polymerase C-terminal region-like"/>
    <property type="match status" value="1"/>
</dbReference>
<dbReference type="PROSITE" id="PS51831">
    <property type="entry name" value="HD"/>
    <property type="match status" value="1"/>
</dbReference>